<gene>
    <name evidence="1" type="primary">cobT</name>
    <name type="synonym">cobU</name>
    <name type="ordered locus">blr3276</name>
</gene>
<keyword id="KW-0169">Cobalamin biosynthesis</keyword>
<keyword id="KW-0328">Glycosyltransferase</keyword>
<keyword id="KW-1185">Reference proteome</keyword>
<keyword id="KW-0808">Transferase</keyword>
<organism>
    <name type="scientific">Bradyrhizobium diazoefficiens (strain JCM 10833 / BCRC 13528 / IAM 13628 / NBRC 14792 / USDA 110)</name>
    <dbReference type="NCBI Taxonomy" id="224911"/>
    <lineage>
        <taxon>Bacteria</taxon>
        <taxon>Pseudomonadati</taxon>
        <taxon>Pseudomonadota</taxon>
        <taxon>Alphaproteobacteria</taxon>
        <taxon>Hyphomicrobiales</taxon>
        <taxon>Nitrobacteraceae</taxon>
        <taxon>Bradyrhizobium</taxon>
    </lineage>
</organism>
<name>COBT_BRADU</name>
<comment type="function">
    <text evidence="1">Catalyzes the synthesis of alpha-ribazole-5'-phosphate from nicotinate mononucleotide (NAMN) and 5,6-dimethylbenzimidazole (DMB).</text>
</comment>
<comment type="catalytic activity">
    <reaction evidence="1">
        <text>5,6-dimethylbenzimidazole + nicotinate beta-D-ribonucleotide = alpha-ribazole 5'-phosphate + nicotinate + H(+)</text>
        <dbReference type="Rhea" id="RHEA:11196"/>
        <dbReference type="ChEBI" id="CHEBI:15378"/>
        <dbReference type="ChEBI" id="CHEBI:15890"/>
        <dbReference type="ChEBI" id="CHEBI:32544"/>
        <dbReference type="ChEBI" id="CHEBI:57502"/>
        <dbReference type="ChEBI" id="CHEBI:57918"/>
        <dbReference type="EC" id="2.4.2.21"/>
    </reaction>
</comment>
<comment type="pathway">
    <text evidence="1">Nucleoside biosynthesis; alpha-ribazole biosynthesis; alpha-ribazole from 5,6-dimethylbenzimidazole: step 1/2.</text>
</comment>
<comment type="similarity">
    <text evidence="1">Belongs to the CobT family.</text>
</comment>
<sequence length="350" mass="35992">MLPEWVYHKCPEISAVHRDAAIVRQAQLTKPTGALGRLEQLAIELAGLQATEQPRAARVPIIIFAGDHGIVAQGVSAYPQAVTIAMMANFASGGAAISVLARELGSHLEVVDAGTLSQDEMIGIVTDRPRHGTRDFSVEAALTLAELAFAFEAGERAVARAAASQPDLLIFGEMGIGNTTTSAAIAASLLGVSAEEIAGSGTGVDAAGRAHKARVIDAAIVRHGVAAASPEKILCAVGGLEIAAICGAIIAAAQRRIPVLIDGFIVSVAALAAVRLNPSCQPFLLPSHQSAEQGHRLVLRALNVQPLISLDLRLGEGSGAAIALPLVRSACALHNGMATFAQANVPDRPA</sequence>
<evidence type="ECO:0000255" key="1">
    <source>
        <dbReference type="HAMAP-Rule" id="MF_00230"/>
    </source>
</evidence>
<proteinExistence type="inferred from homology"/>
<feature type="chain" id="PRO_0000167037" description="Nicotinate-nucleotide--dimethylbenzimidazole phosphoribosyltransferase">
    <location>
        <begin position="1"/>
        <end position="350"/>
    </location>
</feature>
<feature type="active site" description="Proton acceptor" evidence="1">
    <location>
        <position position="316"/>
    </location>
</feature>
<reference key="1">
    <citation type="journal article" date="2002" name="DNA Res.">
        <title>Complete genomic sequence of nitrogen-fixing symbiotic bacterium Bradyrhizobium japonicum USDA110.</title>
        <authorList>
            <person name="Kaneko T."/>
            <person name="Nakamura Y."/>
            <person name="Sato S."/>
            <person name="Minamisawa K."/>
            <person name="Uchiumi T."/>
            <person name="Sasamoto S."/>
            <person name="Watanabe A."/>
            <person name="Idesawa K."/>
            <person name="Iriguchi M."/>
            <person name="Kawashima K."/>
            <person name="Kohara M."/>
            <person name="Matsumoto M."/>
            <person name="Shimpo S."/>
            <person name="Tsuruoka H."/>
            <person name="Wada T."/>
            <person name="Yamada M."/>
            <person name="Tabata S."/>
        </authorList>
    </citation>
    <scope>NUCLEOTIDE SEQUENCE [LARGE SCALE GENOMIC DNA]</scope>
    <source>
        <strain>JCM 10833 / BCRC 13528 / IAM 13628 / NBRC 14792 / USDA 110</strain>
    </source>
</reference>
<accession>Q89Q54</accession>
<protein>
    <recommendedName>
        <fullName evidence="1">Nicotinate-nucleotide--dimethylbenzimidazole phosphoribosyltransferase</fullName>
        <shortName evidence="1">NN:DBI PRT</shortName>
        <ecNumber evidence="1">2.4.2.21</ecNumber>
    </recommendedName>
    <alternativeName>
        <fullName evidence="1">N(1)-alpha-phosphoribosyltransferase</fullName>
    </alternativeName>
</protein>
<dbReference type="EC" id="2.4.2.21" evidence="1"/>
<dbReference type="EMBL" id="BA000040">
    <property type="protein sequence ID" value="BAC48541.1"/>
    <property type="molecule type" value="Genomic_DNA"/>
</dbReference>
<dbReference type="RefSeq" id="NP_769916.1">
    <property type="nucleotide sequence ID" value="NC_004463.1"/>
</dbReference>
<dbReference type="RefSeq" id="WP_011086060.1">
    <property type="nucleotide sequence ID" value="NC_004463.1"/>
</dbReference>
<dbReference type="SMR" id="Q89Q54"/>
<dbReference type="FunCoup" id="Q89Q54">
    <property type="interactions" value="141"/>
</dbReference>
<dbReference type="STRING" id="224911.AAV28_13415"/>
<dbReference type="EnsemblBacteria" id="BAC48541">
    <property type="protein sequence ID" value="BAC48541"/>
    <property type="gene ID" value="BAC48541"/>
</dbReference>
<dbReference type="GeneID" id="46490311"/>
<dbReference type="KEGG" id="bja:blr3276"/>
<dbReference type="PATRIC" id="fig|224911.44.peg.2921"/>
<dbReference type="eggNOG" id="COG2038">
    <property type="taxonomic scope" value="Bacteria"/>
</dbReference>
<dbReference type="HOGENOM" id="CLU_002982_0_1_5"/>
<dbReference type="InParanoid" id="Q89Q54"/>
<dbReference type="OrthoDB" id="9781491at2"/>
<dbReference type="PhylomeDB" id="Q89Q54"/>
<dbReference type="UniPathway" id="UPA00061">
    <property type="reaction ID" value="UER00516"/>
</dbReference>
<dbReference type="Proteomes" id="UP000002526">
    <property type="component" value="Chromosome"/>
</dbReference>
<dbReference type="GO" id="GO:0008939">
    <property type="term" value="F:nicotinate-nucleotide-dimethylbenzimidazole phosphoribosyltransferase activity"/>
    <property type="evidence" value="ECO:0007669"/>
    <property type="project" value="UniProtKB-UniRule"/>
</dbReference>
<dbReference type="GO" id="GO:0009236">
    <property type="term" value="P:cobalamin biosynthetic process"/>
    <property type="evidence" value="ECO:0007669"/>
    <property type="project" value="UniProtKB-KW"/>
</dbReference>
<dbReference type="CDD" id="cd02439">
    <property type="entry name" value="DMB-PRT_CobT"/>
    <property type="match status" value="1"/>
</dbReference>
<dbReference type="FunFam" id="3.40.50.10210:FF:000001">
    <property type="entry name" value="Nicotinate-nucleotide--dimethylbenzimidazole phosphoribosyltransferase"/>
    <property type="match status" value="1"/>
</dbReference>
<dbReference type="Gene3D" id="1.10.1610.10">
    <property type="match status" value="1"/>
</dbReference>
<dbReference type="Gene3D" id="3.40.50.10210">
    <property type="match status" value="1"/>
</dbReference>
<dbReference type="HAMAP" id="MF_00230">
    <property type="entry name" value="CobT"/>
    <property type="match status" value="1"/>
</dbReference>
<dbReference type="InterPro" id="IPR003200">
    <property type="entry name" value="Nict_dMeBzImd_PRibTrfase"/>
</dbReference>
<dbReference type="InterPro" id="IPR017846">
    <property type="entry name" value="Nict_dMeBzImd_PRibTrfase_bact"/>
</dbReference>
<dbReference type="InterPro" id="IPR023195">
    <property type="entry name" value="Nict_dMeBzImd_PRibTrfase_N"/>
</dbReference>
<dbReference type="InterPro" id="IPR036087">
    <property type="entry name" value="Nict_dMeBzImd_PRibTrfase_sf"/>
</dbReference>
<dbReference type="NCBIfam" id="TIGR03160">
    <property type="entry name" value="cobT_DBIPRT"/>
    <property type="match status" value="1"/>
</dbReference>
<dbReference type="NCBIfam" id="NF000996">
    <property type="entry name" value="PRK00105.1"/>
    <property type="match status" value="1"/>
</dbReference>
<dbReference type="PANTHER" id="PTHR43463">
    <property type="entry name" value="NICOTINATE-NUCLEOTIDE--DIMETHYLBENZIMIDAZOLE PHOSPHORIBOSYLTRANSFERASE"/>
    <property type="match status" value="1"/>
</dbReference>
<dbReference type="PANTHER" id="PTHR43463:SF1">
    <property type="entry name" value="NICOTINATE-NUCLEOTIDE--DIMETHYLBENZIMIDAZOLE PHOSPHORIBOSYLTRANSFERASE"/>
    <property type="match status" value="1"/>
</dbReference>
<dbReference type="Pfam" id="PF02277">
    <property type="entry name" value="DBI_PRT"/>
    <property type="match status" value="1"/>
</dbReference>
<dbReference type="SUPFAM" id="SSF52733">
    <property type="entry name" value="Nicotinate mononucleotide:5,6-dimethylbenzimidazole phosphoribosyltransferase (CobT)"/>
    <property type="match status" value="1"/>
</dbReference>